<accession>P9WLC0</accession>
<accession>L0TAU5</accession>
<accession>P64989</accession>
<accession>P71901</accession>
<organism>
    <name type="scientific">Mycobacterium tuberculosis (strain CDC 1551 / Oshkosh)</name>
    <dbReference type="NCBI Taxonomy" id="83331"/>
    <lineage>
        <taxon>Bacteria</taxon>
        <taxon>Bacillati</taxon>
        <taxon>Actinomycetota</taxon>
        <taxon>Actinomycetes</taxon>
        <taxon>Mycobacteriales</taxon>
        <taxon>Mycobacteriaceae</taxon>
        <taxon>Mycobacterium</taxon>
        <taxon>Mycobacterium tuberculosis complex</taxon>
    </lineage>
</organism>
<keyword id="KW-1185">Reference proteome</keyword>
<gene>
    <name type="ordered locus">MT2373</name>
</gene>
<name>Y2311_MYCTO</name>
<reference key="1">
    <citation type="journal article" date="2002" name="J. Bacteriol.">
        <title>Whole-genome comparison of Mycobacterium tuberculosis clinical and laboratory strains.</title>
        <authorList>
            <person name="Fleischmann R.D."/>
            <person name="Alland D."/>
            <person name="Eisen J.A."/>
            <person name="Carpenter L."/>
            <person name="White O."/>
            <person name="Peterson J.D."/>
            <person name="DeBoy R.T."/>
            <person name="Dodson R.J."/>
            <person name="Gwinn M.L."/>
            <person name="Haft D.H."/>
            <person name="Hickey E.K."/>
            <person name="Kolonay J.F."/>
            <person name="Nelson W.C."/>
            <person name="Umayam L.A."/>
            <person name="Ermolaeva M.D."/>
            <person name="Salzberg S.L."/>
            <person name="Delcher A."/>
            <person name="Utterback T.R."/>
            <person name="Weidman J.F."/>
            <person name="Khouri H.M."/>
            <person name="Gill J."/>
            <person name="Mikula A."/>
            <person name="Bishai W."/>
            <person name="Jacobs W.R. Jr."/>
            <person name="Venter J.C."/>
            <person name="Fraser C.M."/>
        </authorList>
    </citation>
    <scope>NUCLEOTIDE SEQUENCE [LARGE SCALE GENOMIC DNA]</scope>
    <source>
        <strain>CDC 1551 / Oshkosh</strain>
    </source>
</reference>
<dbReference type="EMBL" id="AE000516">
    <property type="protein sequence ID" value="AAK46666.1"/>
    <property type="molecule type" value="Genomic_DNA"/>
</dbReference>
<dbReference type="PIR" id="H70702">
    <property type="entry name" value="H70702"/>
</dbReference>
<dbReference type="KEGG" id="mtc:MT2373"/>
<dbReference type="PATRIC" id="fig|83331.31.peg.2557"/>
<dbReference type="HOGENOM" id="CLU_1538423_0_0_11"/>
<dbReference type="Proteomes" id="UP000001020">
    <property type="component" value="Chromosome"/>
</dbReference>
<dbReference type="CDD" id="cd18809">
    <property type="entry name" value="SF1_C_RecD"/>
    <property type="match status" value="1"/>
</dbReference>
<dbReference type="Gene3D" id="3.40.50.300">
    <property type="entry name" value="P-loop containing nucleotide triphosphate hydrolases"/>
    <property type="match status" value="1"/>
</dbReference>
<dbReference type="InterPro" id="IPR027417">
    <property type="entry name" value="P-loop_NTPase"/>
</dbReference>
<dbReference type="SUPFAM" id="SSF52540">
    <property type="entry name" value="P-loop containing nucleoside triphosphate hydrolases"/>
    <property type="match status" value="1"/>
</dbReference>
<feature type="chain" id="PRO_0000427505" description="Uncharacterized protein MT2373">
    <location>
        <begin position="1"/>
        <end position="174"/>
    </location>
</feature>
<protein>
    <recommendedName>
        <fullName>Uncharacterized protein MT2373</fullName>
    </recommendedName>
</protein>
<sequence length="174" mass="18811">MAPTGQAVDVAVREGAGDVGYSVERENLPADDPVRNGNRWRVIAVDTEHHRIAARRLGDGARAAFSGDYLHEHITHGYAITVHASQGTTAHSTHAVLGDNTSRATLYVAMTPARESNTAYLCERTAGEGARVDLAGWDLWVSGKAEAMSDEKSASPVWCRVGARCDHRGKRSCW</sequence>
<proteinExistence type="predicted"/>